<reference key="1">
    <citation type="journal article" date="2013" name="Plant Physiol.">
        <title>A Nostoc punctiforme Sugar Transporter Necessary to Establish a Cyanobacterium-Plant Symbiosis.</title>
        <authorList>
            <person name="Ekman M."/>
            <person name="Picossi S."/>
            <person name="Campbell E.L."/>
            <person name="Meeks J.C."/>
            <person name="Flores E."/>
        </authorList>
    </citation>
    <scope>NUCLEOTIDE SEQUENCE [LARGE SCALE GENOMIC DNA]</scope>
    <source>
        <strain>ATCC 29133 / PCC 73102</strain>
    </source>
</reference>
<keyword id="KW-0004">4Fe-4S</keyword>
<keyword id="KW-0963">Cytoplasm</keyword>
<keyword id="KW-0408">Iron</keyword>
<keyword id="KW-0411">Iron-sulfur</keyword>
<keyword id="KW-0479">Metal-binding</keyword>
<keyword id="KW-1185">Reference proteome</keyword>
<keyword id="KW-0949">S-adenosyl-L-methionine</keyword>
<keyword id="KW-0808">Transferase</keyword>
<keyword id="KW-0819">tRNA processing</keyword>
<protein>
    <recommendedName>
        <fullName evidence="1">tRNA-2-methylthio-N(6)-dimethylallyladenosine synthase</fullName>
        <ecNumber evidence="1">2.8.4.3</ecNumber>
    </recommendedName>
    <alternativeName>
        <fullName evidence="1">(Dimethylallyl)adenosine tRNA methylthiotransferase MiaB</fullName>
    </alternativeName>
    <alternativeName>
        <fullName evidence="1">tRNA-i(6)A37 methylthiotransferase</fullName>
    </alternativeName>
</protein>
<comment type="function">
    <text evidence="1">Catalyzes the methylthiolation of N6-(dimethylallyl)adenosine (i(6)A), leading to the formation of 2-methylthio-N6-(dimethylallyl)adenosine (ms(2)i(6)A) at position 37 in tRNAs that read codons beginning with uridine.</text>
</comment>
<comment type="catalytic activity">
    <reaction evidence="1">
        <text>N(6)-dimethylallyladenosine(37) in tRNA + (sulfur carrier)-SH + AH2 + 2 S-adenosyl-L-methionine = 2-methylsulfanyl-N(6)-dimethylallyladenosine(37) in tRNA + (sulfur carrier)-H + 5'-deoxyadenosine + L-methionine + A + S-adenosyl-L-homocysteine + 2 H(+)</text>
        <dbReference type="Rhea" id="RHEA:37067"/>
        <dbReference type="Rhea" id="RHEA-COMP:10375"/>
        <dbReference type="Rhea" id="RHEA-COMP:10376"/>
        <dbReference type="Rhea" id="RHEA-COMP:14737"/>
        <dbReference type="Rhea" id="RHEA-COMP:14739"/>
        <dbReference type="ChEBI" id="CHEBI:13193"/>
        <dbReference type="ChEBI" id="CHEBI:15378"/>
        <dbReference type="ChEBI" id="CHEBI:17319"/>
        <dbReference type="ChEBI" id="CHEBI:17499"/>
        <dbReference type="ChEBI" id="CHEBI:29917"/>
        <dbReference type="ChEBI" id="CHEBI:57844"/>
        <dbReference type="ChEBI" id="CHEBI:57856"/>
        <dbReference type="ChEBI" id="CHEBI:59789"/>
        <dbReference type="ChEBI" id="CHEBI:64428"/>
        <dbReference type="ChEBI" id="CHEBI:74415"/>
        <dbReference type="ChEBI" id="CHEBI:74417"/>
        <dbReference type="EC" id="2.8.4.3"/>
    </reaction>
</comment>
<comment type="cofactor">
    <cofactor evidence="1">
        <name>[4Fe-4S] cluster</name>
        <dbReference type="ChEBI" id="CHEBI:49883"/>
    </cofactor>
    <text evidence="1">Binds 2 [4Fe-4S] clusters. One cluster is coordinated with 3 cysteines and an exchangeable S-adenosyl-L-methionine.</text>
</comment>
<comment type="subunit">
    <text evidence="1">Monomer.</text>
</comment>
<comment type="subcellular location">
    <subcellularLocation>
        <location evidence="1">Cytoplasm</location>
    </subcellularLocation>
</comment>
<comment type="similarity">
    <text evidence="1">Belongs to the methylthiotransferase family. MiaB subfamily.</text>
</comment>
<feature type="chain" id="PRO_0000374416" description="tRNA-2-methylthio-N(6)-dimethylallyladenosine synthase">
    <location>
        <begin position="1"/>
        <end position="454"/>
    </location>
</feature>
<feature type="domain" description="MTTase N-terminal" evidence="1">
    <location>
        <begin position="6"/>
        <end position="122"/>
    </location>
</feature>
<feature type="domain" description="Radical SAM core" evidence="2">
    <location>
        <begin position="143"/>
        <end position="381"/>
    </location>
</feature>
<feature type="domain" description="TRAM" evidence="1">
    <location>
        <begin position="383"/>
        <end position="447"/>
    </location>
</feature>
<feature type="binding site" evidence="1">
    <location>
        <position position="15"/>
    </location>
    <ligand>
        <name>[4Fe-4S] cluster</name>
        <dbReference type="ChEBI" id="CHEBI:49883"/>
        <label>1</label>
    </ligand>
</feature>
<feature type="binding site" evidence="1">
    <location>
        <position position="51"/>
    </location>
    <ligand>
        <name>[4Fe-4S] cluster</name>
        <dbReference type="ChEBI" id="CHEBI:49883"/>
        <label>1</label>
    </ligand>
</feature>
<feature type="binding site" evidence="1">
    <location>
        <position position="85"/>
    </location>
    <ligand>
        <name>[4Fe-4S] cluster</name>
        <dbReference type="ChEBI" id="CHEBI:49883"/>
        <label>1</label>
    </ligand>
</feature>
<feature type="binding site" evidence="1">
    <location>
        <position position="157"/>
    </location>
    <ligand>
        <name>[4Fe-4S] cluster</name>
        <dbReference type="ChEBI" id="CHEBI:49883"/>
        <label>2</label>
        <note>4Fe-4S-S-AdoMet</note>
    </ligand>
</feature>
<feature type="binding site" evidence="1">
    <location>
        <position position="161"/>
    </location>
    <ligand>
        <name>[4Fe-4S] cluster</name>
        <dbReference type="ChEBI" id="CHEBI:49883"/>
        <label>2</label>
        <note>4Fe-4S-S-AdoMet</note>
    </ligand>
</feature>
<feature type="binding site" evidence="1">
    <location>
        <position position="164"/>
    </location>
    <ligand>
        <name>[4Fe-4S] cluster</name>
        <dbReference type="ChEBI" id="CHEBI:49883"/>
        <label>2</label>
        <note>4Fe-4S-S-AdoMet</note>
    </ligand>
</feature>
<gene>
    <name evidence="1" type="primary">miaB</name>
    <name type="ordered locus">Npun_R0775</name>
</gene>
<proteinExistence type="inferred from homology"/>
<dbReference type="EC" id="2.8.4.3" evidence="1"/>
<dbReference type="EMBL" id="CP001037">
    <property type="protein sequence ID" value="ACC79522.1"/>
    <property type="molecule type" value="Genomic_DNA"/>
</dbReference>
<dbReference type="RefSeq" id="WP_012407547.1">
    <property type="nucleotide sequence ID" value="NC_010628.1"/>
</dbReference>
<dbReference type="SMR" id="B2IT24"/>
<dbReference type="STRING" id="63737.Npun_R0775"/>
<dbReference type="EnsemblBacteria" id="ACC79522">
    <property type="protein sequence ID" value="ACC79522"/>
    <property type="gene ID" value="Npun_R0775"/>
</dbReference>
<dbReference type="KEGG" id="npu:Npun_R0775"/>
<dbReference type="eggNOG" id="COG0621">
    <property type="taxonomic scope" value="Bacteria"/>
</dbReference>
<dbReference type="HOGENOM" id="CLU_018697_2_2_3"/>
<dbReference type="OrthoDB" id="9805215at2"/>
<dbReference type="PhylomeDB" id="B2IT24"/>
<dbReference type="Proteomes" id="UP000001191">
    <property type="component" value="Chromosome"/>
</dbReference>
<dbReference type="GO" id="GO:0005737">
    <property type="term" value="C:cytoplasm"/>
    <property type="evidence" value="ECO:0007669"/>
    <property type="project" value="UniProtKB-SubCell"/>
</dbReference>
<dbReference type="GO" id="GO:0051539">
    <property type="term" value="F:4 iron, 4 sulfur cluster binding"/>
    <property type="evidence" value="ECO:0007669"/>
    <property type="project" value="UniProtKB-UniRule"/>
</dbReference>
<dbReference type="GO" id="GO:0046872">
    <property type="term" value="F:metal ion binding"/>
    <property type="evidence" value="ECO:0007669"/>
    <property type="project" value="UniProtKB-KW"/>
</dbReference>
<dbReference type="GO" id="GO:0035596">
    <property type="term" value="F:methylthiotransferase activity"/>
    <property type="evidence" value="ECO:0007669"/>
    <property type="project" value="InterPro"/>
</dbReference>
<dbReference type="GO" id="GO:0035600">
    <property type="term" value="P:tRNA methylthiolation"/>
    <property type="evidence" value="ECO:0007669"/>
    <property type="project" value="TreeGrafter"/>
</dbReference>
<dbReference type="CDD" id="cd01335">
    <property type="entry name" value="Radical_SAM"/>
    <property type="match status" value="1"/>
</dbReference>
<dbReference type="FunFam" id="3.40.50.12160:FF:000006">
    <property type="entry name" value="tRNA-2-methylthio-N(6)-dimethylallyladenosine synthase"/>
    <property type="match status" value="1"/>
</dbReference>
<dbReference type="FunFam" id="3.80.30.20:FF:000001">
    <property type="entry name" value="tRNA-2-methylthio-N(6)-dimethylallyladenosine synthase 2"/>
    <property type="match status" value="1"/>
</dbReference>
<dbReference type="Gene3D" id="3.40.50.12160">
    <property type="entry name" value="Methylthiotransferase, N-terminal domain"/>
    <property type="match status" value="1"/>
</dbReference>
<dbReference type="Gene3D" id="3.80.30.20">
    <property type="entry name" value="tm_1862 like domain"/>
    <property type="match status" value="1"/>
</dbReference>
<dbReference type="HAMAP" id="MF_01864">
    <property type="entry name" value="tRNA_metthiotr_MiaB"/>
    <property type="match status" value="1"/>
</dbReference>
<dbReference type="InterPro" id="IPR006638">
    <property type="entry name" value="Elp3/MiaA/NifB-like_rSAM"/>
</dbReference>
<dbReference type="InterPro" id="IPR005839">
    <property type="entry name" value="Methylthiotransferase"/>
</dbReference>
<dbReference type="InterPro" id="IPR020612">
    <property type="entry name" value="Methylthiotransferase_CS"/>
</dbReference>
<dbReference type="InterPro" id="IPR013848">
    <property type="entry name" value="Methylthiotransferase_N"/>
</dbReference>
<dbReference type="InterPro" id="IPR038135">
    <property type="entry name" value="Methylthiotransferase_N_sf"/>
</dbReference>
<dbReference type="InterPro" id="IPR006463">
    <property type="entry name" value="MiaB_methiolase"/>
</dbReference>
<dbReference type="InterPro" id="IPR007197">
    <property type="entry name" value="rSAM"/>
</dbReference>
<dbReference type="InterPro" id="IPR023404">
    <property type="entry name" value="rSAM_horseshoe"/>
</dbReference>
<dbReference type="InterPro" id="IPR002792">
    <property type="entry name" value="TRAM_dom"/>
</dbReference>
<dbReference type="NCBIfam" id="TIGR01574">
    <property type="entry name" value="miaB-methiolase"/>
    <property type="match status" value="1"/>
</dbReference>
<dbReference type="NCBIfam" id="TIGR00089">
    <property type="entry name" value="MiaB/RimO family radical SAM methylthiotransferase"/>
    <property type="match status" value="1"/>
</dbReference>
<dbReference type="PANTHER" id="PTHR43020">
    <property type="entry name" value="CDK5 REGULATORY SUBUNIT-ASSOCIATED PROTEIN 1"/>
    <property type="match status" value="1"/>
</dbReference>
<dbReference type="PANTHER" id="PTHR43020:SF2">
    <property type="entry name" value="MITOCHONDRIAL TRNA METHYLTHIOTRANSFERASE CDK5RAP1"/>
    <property type="match status" value="1"/>
</dbReference>
<dbReference type="Pfam" id="PF04055">
    <property type="entry name" value="Radical_SAM"/>
    <property type="match status" value="1"/>
</dbReference>
<dbReference type="Pfam" id="PF01938">
    <property type="entry name" value="TRAM"/>
    <property type="match status" value="1"/>
</dbReference>
<dbReference type="Pfam" id="PF00919">
    <property type="entry name" value="UPF0004"/>
    <property type="match status" value="1"/>
</dbReference>
<dbReference type="SFLD" id="SFLDF00273">
    <property type="entry name" value="(dimethylallyl)adenosine_tRNA"/>
    <property type="match status" value="1"/>
</dbReference>
<dbReference type="SFLD" id="SFLDG01082">
    <property type="entry name" value="B12-binding_domain_containing"/>
    <property type="match status" value="1"/>
</dbReference>
<dbReference type="SFLD" id="SFLDG01061">
    <property type="entry name" value="methylthiotransferase"/>
    <property type="match status" value="1"/>
</dbReference>
<dbReference type="SMART" id="SM00729">
    <property type="entry name" value="Elp3"/>
    <property type="match status" value="1"/>
</dbReference>
<dbReference type="SUPFAM" id="SSF102114">
    <property type="entry name" value="Radical SAM enzymes"/>
    <property type="match status" value="1"/>
</dbReference>
<dbReference type="PROSITE" id="PS51449">
    <property type="entry name" value="MTTASE_N"/>
    <property type="match status" value="1"/>
</dbReference>
<dbReference type="PROSITE" id="PS01278">
    <property type="entry name" value="MTTASE_RADICAL"/>
    <property type="match status" value="1"/>
</dbReference>
<dbReference type="PROSITE" id="PS51918">
    <property type="entry name" value="RADICAL_SAM"/>
    <property type="match status" value="1"/>
</dbReference>
<dbReference type="PROSITE" id="PS50926">
    <property type="entry name" value="TRAM"/>
    <property type="match status" value="1"/>
</dbReference>
<evidence type="ECO:0000255" key="1">
    <source>
        <dbReference type="HAMAP-Rule" id="MF_01864"/>
    </source>
</evidence>
<evidence type="ECO:0000255" key="2">
    <source>
        <dbReference type="PROSITE-ProRule" id="PRU01266"/>
    </source>
</evidence>
<accession>B2IT24</accession>
<name>MIAB_NOSP7</name>
<organism>
    <name type="scientific">Nostoc punctiforme (strain ATCC 29133 / PCC 73102)</name>
    <dbReference type="NCBI Taxonomy" id="63737"/>
    <lineage>
        <taxon>Bacteria</taxon>
        <taxon>Bacillati</taxon>
        <taxon>Cyanobacteriota</taxon>
        <taxon>Cyanophyceae</taxon>
        <taxon>Nostocales</taxon>
        <taxon>Nostocaceae</taxon>
        <taxon>Nostoc</taxon>
    </lineage>
</organism>
<sequence length="454" mass="51625">MTTSKRHYHITTFGCQMNKADSERMAGVLEDMGFEWSEDPNNADVILYNTCTIRDNAEQKVYSYLGRQAKRKHDQPDLTLIVAGCVAQQEGEALLRRVPELDLVMGPQHANRLKDLLESVFDGNQVVATESVHIIEDITQPRRDSKVTAWVNVIYGCNERCTYCVVPNVRGIEQSRTPSAIRAEMEELGRQGYKEITLLGQNIDAYGRDLPGTTPEGRHLHNFTDLLYYVHDVPGIERLRFATSHPRYFTERLIKACAELPKVCKHFHIPFQSGDNELLKAMARGYTHEKYRRIIDTIRRYMPDASISADAIVGFPGETEAQFENTLKLVEDIGFDMLNTAAYSPRPGTPAALWDNQLSEEVKSDRLQRLNHLGNLKVAERSQRYFGRIEEVLVEDQNPKDQTQVMGRTDGNRLTFFSGDIKELKGQLVKVKITEVRPFSLTGQPVEVRQAIPV</sequence>